<dbReference type="EC" id="3.6.1.13"/>
<dbReference type="EC" id="3.6.1.16"/>
<dbReference type="EC" id="3.6.1.53"/>
<dbReference type="EMBL" id="BC054642">
    <property type="protein sequence ID" value="AAH54642.1"/>
    <property type="molecule type" value="mRNA"/>
</dbReference>
<dbReference type="RefSeq" id="NP_956715.1">
    <property type="nucleotide sequence ID" value="NM_200421.1"/>
</dbReference>
<dbReference type="PDB" id="2NXF">
    <property type="method" value="X-ray"/>
    <property type="resolution" value="1.70 A"/>
    <property type="chains" value="A=2-322"/>
</dbReference>
<dbReference type="PDBsum" id="2NXF"/>
<dbReference type="SMR" id="Q7T291"/>
<dbReference type="FunCoup" id="Q7T291">
    <property type="interactions" value="160"/>
</dbReference>
<dbReference type="STRING" id="7955.ENSDARP00000096471"/>
<dbReference type="PaxDb" id="7955-ENSDARP00000096471"/>
<dbReference type="DNASU" id="393393"/>
<dbReference type="GeneID" id="393393"/>
<dbReference type="KEGG" id="dre:393393"/>
<dbReference type="AGR" id="ZFIN:ZDB-GENE-040426-1406"/>
<dbReference type="CTD" id="56985"/>
<dbReference type="ZFIN" id="ZDB-GENE-040426-1406">
    <property type="gene designation" value="adprm"/>
</dbReference>
<dbReference type="eggNOG" id="ENOG502QUQW">
    <property type="taxonomic scope" value="Eukaryota"/>
</dbReference>
<dbReference type="InParanoid" id="Q7T291"/>
<dbReference type="OrthoDB" id="9675250at2759"/>
<dbReference type="PhylomeDB" id="Q7T291"/>
<dbReference type="BRENDA" id="3.6.1.13">
    <property type="organism ID" value="928"/>
</dbReference>
<dbReference type="BRENDA" id="3.6.1.53">
    <property type="organism ID" value="928"/>
</dbReference>
<dbReference type="Reactome" id="R-DRE-2393930">
    <property type="pathway name" value="Phosphate bond hydrolysis by NUDT proteins"/>
</dbReference>
<dbReference type="EvolutionaryTrace" id="Q7T291"/>
<dbReference type="PRO" id="PR:Q7T291"/>
<dbReference type="Proteomes" id="UP000000437">
    <property type="component" value="Chromosome 12"/>
</dbReference>
<dbReference type="GO" id="GO:0008663">
    <property type="term" value="F:2',3'-cyclic-nucleotide 2'-phosphodiesterase activity"/>
    <property type="evidence" value="ECO:0000314"/>
    <property type="project" value="ZFIN"/>
</dbReference>
<dbReference type="GO" id="GO:0047631">
    <property type="term" value="F:ADP-ribose diphosphatase activity"/>
    <property type="evidence" value="ECO:0000314"/>
    <property type="project" value="ZFIN"/>
</dbReference>
<dbReference type="GO" id="GO:0047734">
    <property type="term" value="F:CDP-glycerol diphosphatase activity"/>
    <property type="evidence" value="ECO:0000314"/>
    <property type="project" value="ZFIN"/>
</dbReference>
<dbReference type="GO" id="GO:0030145">
    <property type="term" value="F:manganese ion binding"/>
    <property type="evidence" value="ECO:0000314"/>
    <property type="project" value="ZFIN"/>
</dbReference>
<dbReference type="CDD" id="cd07396">
    <property type="entry name" value="MPP_Nbla03831"/>
    <property type="match status" value="1"/>
</dbReference>
<dbReference type="Gene3D" id="3.60.21.10">
    <property type="match status" value="1"/>
</dbReference>
<dbReference type="InterPro" id="IPR004843">
    <property type="entry name" value="Calcineurin-like_PHP_ApaH"/>
</dbReference>
<dbReference type="InterPro" id="IPR029052">
    <property type="entry name" value="Metallo-depent_PP-like"/>
</dbReference>
<dbReference type="InterPro" id="IPR041869">
    <property type="entry name" value="MPP_ADPRM"/>
</dbReference>
<dbReference type="PANTHER" id="PTHR16509">
    <property type="match status" value="1"/>
</dbReference>
<dbReference type="PANTHER" id="PTHR16509:SF1">
    <property type="entry name" value="MANGANESE-DEPENDENT ADP-RIBOSE_CDP-ALCOHOL DIPHOSPHATASE"/>
    <property type="match status" value="1"/>
</dbReference>
<dbReference type="Pfam" id="PF00149">
    <property type="entry name" value="Metallophos"/>
    <property type="match status" value="1"/>
</dbReference>
<dbReference type="SUPFAM" id="SSF56300">
    <property type="entry name" value="Metallo-dependent phosphatases"/>
    <property type="match status" value="1"/>
</dbReference>
<name>ADPRM_DANRE</name>
<keyword id="KW-0002">3D-structure</keyword>
<keyword id="KW-0378">Hydrolase</keyword>
<keyword id="KW-0479">Metal-binding</keyword>
<keyword id="KW-1185">Reference proteome</keyword>
<keyword id="KW-0862">Zinc</keyword>
<evidence type="ECO:0000250" key="1"/>
<evidence type="ECO:0000269" key="2">
    <source ref="2"/>
</evidence>
<evidence type="ECO:0000305" key="3"/>
<evidence type="ECO:0007829" key="4">
    <source>
        <dbReference type="PDB" id="2NXF"/>
    </source>
</evidence>
<protein>
    <recommendedName>
        <fullName>Manganese-dependent ADP-ribose/CDP-alcohol diphosphatase</fullName>
        <ecNumber>3.6.1.13</ecNumber>
        <ecNumber>3.6.1.16</ecNumber>
        <ecNumber>3.6.1.53</ecNumber>
    </recommendedName>
    <alternativeName>
        <fullName>ADPRibase-Mn</fullName>
    </alternativeName>
    <alternativeName>
        <fullName>CDP-choline phosphohydrolase</fullName>
    </alternativeName>
</protein>
<organism>
    <name type="scientific">Danio rerio</name>
    <name type="common">Zebrafish</name>
    <name type="synonym">Brachydanio rerio</name>
    <dbReference type="NCBI Taxonomy" id="7955"/>
    <lineage>
        <taxon>Eukaryota</taxon>
        <taxon>Metazoa</taxon>
        <taxon>Chordata</taxon>
        <taxon>Craniata</taxon>
        <taxon>Vertebrata</taxon>
        <taxon>Euteleostomi</taxon>
        <taxon>Actinopterygii</taxon>
        <taxon>Neopterygii</taxon>
        <taxon>Teleostei</taxon>
        <taxon>Ostariophysi</taxon>
        <taxon>Cypriniformes</taxon>
        <taxon>Danionidae</taxon>
        <taxon>Danioninae</taxon>
        <taxon>Danio</taxon>
    </lineage>
</organism>
<proteinExistence type="evidence at protein level"/>
<sequence length="322" mass="36645">MEDPVFTFGLIADVQYADIEDGENYLRTRRRYYRGSADLLRDAVLQWRRERVQCVVQLGDIIDGHNRRRDASDRALDTVMAELDACSVDVHHVWGNHEFYNFSRPSLLSSRLNSAQRTGTDTGSDLIGDDIYAYEFSPAPNFRFVLLDAYDLSVIGREEESEKHTHSWRILTQHNHNLQDLNLPPVSVGLEQRFVKFNGGFSEQQLQWLDAVLTLSDHKQERVLIFSHLPVHPCAADPICLAWNHEAVLSVLRSHQSVLCFIAGHDHDGGRCTDSSGAQHITLEGVIETPPHSHAFATAYLYEDRMVMKGRGRVEDLTITYS</sequence>
<gene>
    <name type="primary">adprm</name>
    <name type="ORF">zgc:64213</name>
</gene>
<comment type="function">
    <text evidence="1">Hydrolyzes ADP-ribose, IDP-ribose, CDP-glycerol, CDP-choline and CDP-ethanolamine, but not other non-reducing ADP-sugars or CDP-glucose.</text>
</comment>
<comment type="catalytic activity">
    <reaction>
        <text>CDP-choline + H2O = phosphocholine + CMP + 2 H(+)</text>
        <dbReference type="Rhea" id="RHEA:32487"/>
        <dbReference type="ChEBI" id="CHEBI:15377"/>
        <dbReference type="ChEBI" id="CHEBI:15378"/>
        <dbReference type="ChEBI" id="CHEBI:58779"/>
        <dbReference type="ChEBI" id="CHEBI:60377"/>
        <dbReference type="ChEBI" id="CHEBI:295975"/>
        <dbReference type="EC" id="3.6.1.53"/>
    </reaction>
</comment>
<comment type="catalytic activity">
    <reaction>
        <text>ADP-D-ribose + H2O = D-ribose 5-phosphate + AMP + 2 H(+)</text>
        <dbReference type="Rhea" id="RHEA:10412"/>
        <dbReference type="ChEBI" id="CHEBI:15377"/>
        <dbReference type="ChEBI" id="CHEBI:15378"/>
        <dbReference type="ChEBI" id="CHEBI:57967"/>
        <dbReference type="ChEBI" id="CHEBI:78346"/>
        <dbReference type="ChEBI" id="CHEBI:456215"/>
        <dbReference type="EC" id="3.6.1.13"/>
    </reaction>
</comment>
<comment type="catalytic activity">
    <reaction>
        <text>ADP-D-ribose + H2O = D-ribose 5-phosphate + AMP + 2 H(+)</text>
        <dbReference type="Rhea" id="RHEA:10412"/>
        <dbReference type="ChEBI" id="CHEBI:15377"/>
        <dbReference type="ChEBI" id="CHEBI:15378"/>
        <dbReference type="ChEBI" id="CHEBI:57967"/>
        <dbReference type="ChEBI" id="CHEBI:78346"/>
        <dbReference type="ChEBI" id="CHEBI:456215"/>
        <dbReference type="EC" id="3.6.1.53"/>
    </reaction>
</comment>
<comment type="catalytic activity">
    <reaction>
        <text>CDP-glycerol + H2O = sn-glycerol 3-phosphate + CMP + 2 H(+)</text>
        <dbReference type="Rhea" id="RHEA:21692"/>
        <dbReference type="ChEBI" id="CHEBI:15377"/>
        <dbReference type="ChEBI" id="CHEBI:15378"/>
        <dbReference type="ChEBI" id="CHEBI:57597"/>
        <dbReference type="ChEBI" id="CHEBI:58311"/>
        <dbReference type="ChEBI" id="CHEBI:60377"/>
        <dbReference type="EC" id="3.6.1.16"/>
    </reaction>
</comment>
<comment type="cofactor">
    <cofactor evidence="1">
        <name>Mg(2+)</name>
        <dbReference type="ChEBI" id="CHEBI:18420"/>
    </cofactor>
</comment>
<comment type="subunit">
    <text evidence="1">Monomer.</text>
</comment>
<comment type="similarity">
    <text evidence="3">Belongs to the ADPRibase-Mn family.</text>
</comment>
<reference key="1">
    <citation type="submission" date="2003-07" db="EMBL/GenBank/DDBJ databases">
        <authorList>
            <consortium name="NIH - Zebrafish Gene Collection (ZGC) project"/>
        </authorList>
    </citation>
    <scope>NUCLEOTIDE SEQUENCE [LARGE SCALE MRNA]</scope>
    <source>
        <tissue>Embryo</tissue>
    </source>
</reference>
<reference key="2">
    <citation type="submission" date="2006-12" db="PDB data bank">
        <title>Crystal structure of a dimetal phosphatase from Danio rerio loc 393393.</title>
        <authorList>
            <consortium name="Center for eukaryotic structural genomics (CESG)"/>
        </authorList>
    </citation>
    <scope>X-RAY CRYSTALLOGRAPHY (1.7 ANGSTROMS) IN COMPLEX WITH ZINC</scope>
</reference>
<feature type="chain" id="PRO_0000286570" description="Manganese-dependent ADP-ribose/CDP-alcohol diphosphatase">
    <location>
        <begin position="1"/>
        <end position="322"/>
    </location>
</feature>
<feature type="binding site" evidence="1">
    <location>
        <position position="13"/>
    </location>
    <ligand>
        <name>Zn(2+)</name>
        <dbReference type="ChEBI" id="CHEBI:29105"/>
        <label>1</label>
    </ligand>
</feature>
<feature type="binding site" evidence="1">
    <location>
        <position position="15"/>
    </location>
    <ligand>
        <name>Zn(2+)</name>
        <dbReference type="ChEBI" id="CHEBI:29105"/>
        <label>1</label>
    </ligand>
</feature>
<feature type="binding site" evidence="1">
    <location>
        <position position="60"/>
    </location>
    <ligand>
        <name>Zn(2+)</name>
        <dbReference type="ChEBI" id="CHEBI:29105"/>
        <label>1</label>
    </ligand>
</feature>
<feature type="binding site" evidence="2">
    <location>
        <position position="60"/>
    </location>
    <ligand>
        <name>Zn(2+)</name>
        <dbReference type="ChEBI" id="CHEBI:29105"/>
        <label>2</label>
    </ligand>
</feature>
<feature type="binding site" evidence="2">
    <location>
        <position position="96"/>
    </location>
    <ligand>
        <name>Zn(2+)</name>
        <dbReference type="ChEBI" id="CHEBI:29105"/>
        <label>2</label>
    </ligand>
</feature>
<feature type="binding site" evidence="2">
    <location>
        <position position="228"/>
    </location>
    <ligand>
        <name>Zn(2+)</name>
        <dbReference type="ChEBI" id="CHEBI:29105"/>
        <label>2</label>
    </ligand>
</feature>
<feature type="binding site" evidence="2">
    <location>
        <position position="265"/>
    </location>
    <ligand>
        <name>Zn(2+)</name>
        <dbReference type="ChEBI" id="CHEBI:29105"/>
        <label>2</label>
    </ligand>
</feature>
<feature type="binding site" evidence="1">
    <location>
        <position position="267"/>
    </location>
    <ligand>
        <name>Zn(2+)</name>
        <dbReference type="ChEBI" id="CHEBI:29105"/>
        <label>1</label>
    </ligand>
</feature>
<feature type="strand" evidence="4">
    <location>
        <begin position="5"/>
        <end position="11"/>
    </location>
</feature>
<feature type="strand" evidence="4">
    <location>
        <begin position="27"/>
        <end position="31"/>
    </location>
</feature>
<feature type="helix" evidence="4">
    <location>
        <begin position="35"/>
        <end position="49"/>
    </location>
</feature>
<feature type="strand" evidence="4">
    <location>
        <begin position="53"/>
        <end position="57"/>
    </location>
</feature>
<feature type="helix" evidence="4">
    <location>
        <begin position="65"/>
        <end position="68"/>
    </location>
</feature>
<feature type="helix" evidence="4">
    <location>
        <begin position="72"/>
        <end position="84"/>
    </location>
</feature>
<feature type="strand" evidence="4">
    <location>
        <begin position="88"/>
        <end position="92"/>
    </location>
</feature>
<feature type="helix" evidence="4">
    <location>
        <begin position="96"/>
        <end position="101"/>
    </location>
</feature>
<feature type="helix" evidence="4">
    <location>
        <begin position="104"/>
        <end position="108"/>
    </location>
</feature>
<feature type="helix" evidence="4">
    <location>
        <begin position="127"/>
        <end position="129"/>
    </location>
</feature>
<feature type="strand" evidence="4">
    <location>
        <begin position="134"/>
        <end position="139"/>
    </location>
</feature>
<feature type="strand" evidence="4">
    <location>
        <begin position="142"/>
        <end position="146"/>
    </location>
</feature>
<feature type="strand" evidence="4">
    <location>
        <begin position="154"/>
        <end position="157"/>
    </location>
</feature>
<feature type="helix" evidence="4">
    <location>
        <begin position="162"/>
        <end position="174"/>
    </location>
</feature>
<feature type="strand" evidence="4">
    <location>
        <begin position="187"/>
        <end position="189"/>
    </location>
</feature>
<feature type="helix" evidence="4">
    <location>
        <begin position="190"/>
        <end position="193"/>
    </location>
</feature>
<feature type="helix" evidence="4">
    <location>
        <begin position="203"/>
        <end position="219"/>
    </location>
</feature>
<feature type="strand" evidence="4">
    <location>
        <begin position="222"/>
        <end position="229"/>
    </location>
</feature>
<feature type="helix" evidence="4">
    <location>
        <begin position="238"/>
        <end position="240"/>
    </location>
</feature>
<feature type="helix" evidence="4">
    <location>
        <begin position="245"/>
        <end position="253"/>
    </location>
</feature>
<feature type="strand" evidence="4">
    <location>
        <begin position="258"/>
        <end position="263"/>
    </location>
</feature>
<feature type="strand" evidence="4">
    <location>
        <begin position="270"/>
        <end position="273"/>
    </location>
</feature>
<feature type="strand" evidence="4">
    <location>
        <begin position="279"/>
        <end position="282"/>
    </location>
</feature>
<feature type="helix" evidence="4">
    <location>
        <begin position="286"/>
        <end position="288"/>
    </location>
</feature>
<feature type="strand" evidence="4">
    <location>
        <begin position="295"/>
        <end position="301"/>
    </location>
</feature>
<feature type="strand" evidence="4">
    <location>
        <begin position="303"/>
        <end position="312"/>
    </location>
</feature>
<feature type="strand" evidence="4">
    <location>
        <begin position="317"/>
        <end position="320"/>
    </location>
</feature>
<accession>Q7T291</accession>